<proteinExistence type="inferred from homology"/>
<name>MNMA_RIPO1</name>
<protein>
    <recommendedName>
        <fullName evidence="1">tRNA-specific 2-thiouridylase MnmA</fullName>
        <ecNumber evidence="1">2.8.1.13</ecNumber>
    </recommendedName>
</protein>
<evidence type="ECO:0000255" key="1">
    <source>
        <dbReference type="HAMAP-Rule" id="MF_00144"/>
    </source>
</evidence>
<sequence length="349" mass="38521">MNKVVVGLSGGVDSSVAAAVLHHQGYEVIGLTLWLMKGKGQCCSEGMVDAAFICEQLGIPHHIVDSRDVFQANIVNYLVSGYEAGITPLPCSQCNRAVKFGPMLNYARQELGCDRIATGHYARIRYDEISQRYQLLRAIDRNKDQSYFLYDLSQEMLAGTVFPLGDQTKEDTRRIAAEFDLKTASKPESQDLCLIEAHGSMKTFLDQYIHQKEGDIVDLEGKVLGKHQGIHHYTIGQRKGLGVAAPEPLYVVKLDPIMNQVIVANRANAGRSDCTVTRLNWVSIAAPSTPIRVETQIRYRSSAVPVDLIPLEDNRVKLVFDEPEFGITPGQAAVFYDGEILLGGGIIEL</sequence>
<dbReference type="EC" id="2.8.1.13" evidence="1"/>
<dbReference type="EMBL" id="CP001287">
    <property type="protein sequence ID" value="ACK67507.1"/>
    <property type="molecule type" value="Genomic_DNA"/>
</dbReference>
<dbReference type="RefSeq" id="WP_012596765.1">
    <property type="nucleotide sequence ID" value="NC_011726.1"/>
</dbReference>
<dbReference type="SMR" id="B7K1G5"/>
<dbReference type="STRING" id="41431.PCC8801_3542"/>
<dbReference type="KEGG" id="cyp:PCC8801_3542"/>
<dbReference type="eggNOG" id="COG0482">
    <property type="taxonomic scope" value="Bacteria"/>
</dbReference>
<dbReference type="HOGENOM" id="CLU_035188_0_0_3"/>
<dbReference type="OrthoDB" id="9800696at2"/>
<dbReference type="Proteomes" id="UP000008204">
    <property type="component" value="Chromosome"/>
</dbReference>
<dbReference type="GO" id="GO:0005737">
    <property type="term" value="C:cytoplasm"/>
    <property type="evidence" value="ECO:0007669"/>
    <property type="project" value="UniProtKB-SubCell"/>
</dbReference>
<dbReference type="GO" id="GO:0005524">
    <property type="term" value="F:ATP binding"/>
    <property type="evidence" value="ECO:0007669"/>
    <property type="project" value="UniProtKB-KW"/>
</dbReference>
<dbReference type="GO" id="GO:0000049">
    <property type="term" value="F:tRNA binding"/>
    <property type="evidence" value="ECO:0007669"/>
    <property type="project" value="UniProtKB-KW"/>
</dbReference>
<dbReference type="GO" id="GO:0103016">
    <property type="term" value="F:tRNA-uridine 2-sulfurtransferase activity"/>
    <property type="evidence" value="ECO:0007669"/>
    <property type="project" value="UniProtKB-EC"/>
</dbReference>
<dbReference type="GO" id="GO:0002143">
    <property type="term" value="P:tRNA wobble position uridine thiolation"/>
    <property type="evidence" value="ECO:0007669"/>
    <property type="project" value="TreeGrafter"/>
</dbReference>
<dbReference type="CDD" id="cd01998">
    <property type="entry name" value="MnmA_TRMU-like"/>
    <property type="match status" value="1"/>
</dbReference>
<dbReference type="FunFam" id="2.30.30.280:FF:000001">
    <property type="entry name" value="tRNA-specific 2-thiouridylase MnmA"/>
    <property type="match status" value="1"/>
</dbReference>
<dbReference type="FunFam" id="2.40.30.10:FF:000023">
    <property type="entry name" value="tRNA-specific 2-thiouridylase MnmA"/>
    <property type="match status" value="1"/>
</dbReference>
<dbReference type="FunFam" id="3.40.50.620:FF:000302">
    <property type="entry name" value="tRNA-specific 2-thiouridylase MnmA"/>
    <property type="match status" value="1"/>
</dbReference>
<dbReference type="Gene3D" id="2.30.30.280">
    <property type="entry name" value="Adenine nucleotide alpha hydrolases-like domains"/>
    <property type="match status" value="1"/>
</dbReference>
<dbReference type="Gene3D" id="3.40.50.620">
    <property type="entry name" value="HUPs"/>
    <property type="match status" value="1"/>
</dbReference>
<dbReference type="Gene3D" id="2.40.30.10">
    <property type="entry name" value="Translation factors"/>
    <property type="match status" value="1"/>
</dbReference>
<dbReference type="HAMAP" id="MF_00144">
    <property type="entry name" value="tRNA_thiouridyl_MnmA"/>
    <property type="match status" value="1"/>
</dbReference>
<dbReference type="InterPro" id="IPR004506">
    <property type="entry name" value="MnmA-like"/>
</dbReference>
<dbReference type="InterPro" id="IPR046885">
    <property type="entry name" value="MnmA-like_C"/>
</dbReference>
<dbReference type="InterPro" id="IPR046884">
    <property type="entry name" value="MnmA-like_central"/>
</dbReference>
<dbReference type="InterPro" id="IPR023382">
    <property type="entry name" value="MnmA-like_central_sf"/>
</dbReference>
<dbReference type="InterPro" id="IPR014729">
    <property type="entry name" value="Rossmann-like_a/b/a_fold"/>
</dbReference>
<dbReference type="NCBIfam" id="NF001138">
    <property type="entry name" value="PRK00143.1"/>
    <property type="match status" value="1"/>
</dbReference>
<dbReference type="NCBIfam" id="TIGR00420">
    <property type="entry name" value="trmU"/>
    <property type="match status" value="1"/>
</dbReference>
<dbReference type="PANTHER" id="PTHR11933:SF5">
    <property type="entry name" value="MITOCHONDRIAL TRNA-SPECIFIC 2-THIOURIDYLASE 1"/>
    <property type="match status" value="1"/>
</dbReference>
<dbReference type="PANTHER" id="PTHR11933">
    <property type="entry name" value="TRNA 5-METHYLAMINOMETHYL-2-THIOURIDYLATE -METHYLTRANSFERASE"/>
    <property type="match status" value="1"/>
</dbReference>
<dbReference type="Pfam" id="PF03054">
    <property type="entry name" value="tRNA_Me_trans"/>
    <property type="match status" value="1"/>
</dbReference>
<dbReference type="Pfam" id="PF20258">
    <property type="entry name" value="tRNA_Me_trans_C"/>
    <property type="match status" value="1"/>
</dbReference>
<dbReference type="Pfam" id="PF20259">
    <property type="entry name" value="tRNA_Me_trans_M"/>
    <property type="match status" value="1"/>
</dbReference>
<dbReference type="SUPFAM" id="SSF52402">
    <property type="entry name" value="Adenine nucleotide alpha hydrolases-like"/>
    <property type="match status" value="1"/>
</dbReference>
<reference key="1">
    <citation type="journal article" date="2011" name="MBio">
        <title>Novel metabolic attributes of the genus Cyanothece, comprising a group of unicellular nitrogen-fixing Cyanobacteria.</title>
        <authorList>
            <person name="Bandyopadhyay A."/>
            <person name="Elvitigala T."/>
            <person name="Welsh E."/>
            <person name="Stockel J."/>
            <person name="Liberton M."/>
            <person name="Min H."/>
            <person name="Sherman L.A."/>
            <person name="Pakrasi H.B."/>
        </authorList>
    </citation>
    <scope>NUCLEOTIDE SEQUENCE [LARGE SCALE GENOMIC DNA]</scope>
    <source>
        <strain>PCC 8801 / RF-1</strain>
    </source>
</reference>
<comment type="function">
    <text evidence="1">Catalyzes the 2-thiolation of uridine at the wobble position (U34) of tRNA, leading to the formation of s(2)U34.</text>
</comment>
<comment type="catalytic activity">
    <reaction evidence="1">
        <text>S-sulfanyl-L-cysteinyl-[protein] + uridine(34) in tRNA + AH2 + ATP = 2-thiouridine(34) in tRNA + L-cysteinyl-[protein] + A + AMP + diphosphate + H(+)</text>
        <dbReference type="Rhea" id="RHEA:47032"/>
        <dbReference type="Rhea" id="RHEA-COMP:10131"/>
        <dbReference type="Rhea" id="RHEA-COMP:11726"/>
        <dbReference type="Rhea" id="RHEA-COMP:11727"/>
        <dbReference type="Rhea" id="RHEA-COMP:11728"/>
        <dbReference type="ChEBI" id="CHEBI:13193"/>
        <dbReference type="ChEBI" id="CHEBI:15378"/>
        <dbReference type="ChEBI" id="CHEBI:17499"/>
        <dbReference type="ChEBI" id="CHEBI:29950"/>
        <dbReference type="ChEBI" id="CHEBI:30616"/>
        <dbReference type="ChEBI" id="CHEBI:33019"/>
        <dbReference type="ChEBI" id="CHEBI:61963"/>
        <dbReference type="ChEBI" id="CHEBI:65315"/>
        <dbReference type="ChEBI" id="CHEBI:87170"/>
        <dbReference type="ChEBI" id="CHEBI:456215"/>
        <dbReference type="EC" id="2.8.1.13"/>
    </reaction>
</comment>
<comment type="subcellular location">
    <subcellularLocation>
        <location evidence="1">Cytoplasm</location>
    </subcellularLocation>
</comment>
<comment type="similarity">
    <text evidence="1">Belongs to the MnmA/TRMU family.</text>
</comment>
<keyword id="KW-0067">ATP-binding</keyword>
<keyword id="KW-0963">Cytoplasm</keyword>
<keyword id="KW-1015">Disulfide bond</keyword>
<keyword id="KW-0547">Nucleotide-binding</keyword>
<keyword id="KW-1185">Reference proteome</keyword>
<keyword id="KW-0694">RNA-binding</keyword>
<keyword id="KW-0808">Transferase</keyword>
<keyword id="KW-0819">tRNA processing</keyword>
<keyword id="KW-0820">tRNA-binding</keyword>
<organism>
    <name type="scientific">Rippkaea orientalis (strain PCC 8801 / RF-1)</name>
    <name type="common">Cyanothece sp. (strain PCC 8801)</name>
    <dbReference type="NCBI Taxonomy" id="41431"/>
    <lineage>
        <taxon>Bacteria</taxon>
        <taxon>Bacillati</taxon>
        <taxon>Cyanobacteriota</taxon>
        <taxon>Cyanophyceae</taxon>
        <taxon>Oscillatoriophycideae</taxon>
        <taxon>Chroococcales</taxon>
        <taxon>Aphanothecaceae</taxon>
        <taxon>Rippkaea</taxon>
        <taxon>Rippkaea orientalis</taxon>
    </lineage>
</organism>
<gene>
    <name evidence="1" type="primary">mnmA</name>
    <name type="ordered locus">PCC8801_3542</name>
</gene>
<feature type="chain" id="PRO_1000198609" description="tRNA-specific 2-thiouridylase MnmA">
    <location>
        <begin position="1"/>
        <end position="349"/>
    </location>
</feature>
<feature type="region of interest" description="Interaction with tRNA" evidence="1">
    <location>
        <begin position="143"/>
        <end position="145"/>
    </location>
</feature>
<feature type="region of interest" description="Interaction with tRNA" evidence="1">
    <location>
        <begin position="298"/>
        <end position="299"/>
    </location>
</feature>
<feature type="active site" description="Nucleophile" evidence="1">
    <location>
        <position position="94"/>
    </location>
</feature>
<feature type="active site" description="Cysteine persulfide intermediate" evidence="1">
    <location>
        <position position="193"/>
    </location>
</feature>
<feature type="binding site" evidence="1">
    <location>
        <begin position="7"/>
        <end position="14"/>
    </location>
    <ligand>
        <name>ATP</name>
        <dbReference type="ChEBI" id="CHEBI:30616"/>
    </ligand>
</feature>
<feature type="binding site" evidence="1">
    <location>
        <position position="33"/>
    </location>
    <ligand>
        <name>ATP</name>
        <dbReference type="ChEBI" id="CHEBI:30616"/>
    </ligand>
</feature>
<feature type="binding site" evidence="1">
    <location>
        <position position="119"/>
    </location>
    <ligand>
        <name>ATP</name>
        <dbReference type="ChEBI" id="CHEBI:30616"/>
    </ligand>
</feature>
<feature type="site" description="Interaction with tRNA" evidence="1">
    <location>
        <position position="120"/>
    </location>
</feature>
<feature type="site" description="Interaction with tRNA" evidence="1">
    <location>
        <position position="331"/>
    </location>
</feature>
<feature type="disulfide bond" description="Alternate" evidence="1">
    <location>
        <begin position="94"/>
        <end position="193"/>
    </location>
</feature>
<accession>B7K1G5</accession>